<proteinExistence type="inferred from homology"/>
<keyword id="KW-0067">ATP-binding</keyword>
<keyword id="KW-0963">Cytoplasm</keyword>
<keyword id="KW-0275">Fatty acid biosynthesis</keyword>
<keyword id="KW-0276">Fatty acid metabolism</keyword>
<keyword id="KW-0444">Lipid biosynthesis</keyword>
<keyword id="KW-0443">Lipid metabolism</keyword>
<keyword id="KW-0547">Nucleotide-binding</keyword>
<keyword id="KW-0808">Transferase</keyword>
<reference key="1">
    <citation type="journal article" date="2007" name="J. Bacteriol.">
        <title>Complete genome sequence of Haemophilus somnus (Histophilus somni) strain 129Pt and comparison to Haemophilus ducreyi 35000HP and Haemophilus influenzae Rd.</title>
        <authorList>
            <person name="Challacombe J.F."/>
            <person name="Duncan A.J."/>
            <person name="Brettin T.S."/>
            <person name="Bruce D."/>
            <person name="Chertkov O."/>
            <person name="Detter J.C."/>
            <person name="Han C.S."/>
            <person name="Misra M."/>
            <person name="Richardson P."/>
            <person name="Tapia R."/>
            <person name="Thayer N."/>
            <person name="Xie G."/>
            <person name="Inzana T.J."/>
        </authorList>
    </citation>
    <scope>NUCLEOTIDE SEQUENCE [LARGE SCALE GENOMIC DNA]</scope>
    <source>
        <strain>129Pt</strain>
    </source>
</reference>
<dbReference type="EC" id="2.1.3.15" evidence="1"/>
<dbReference type="EMBL" id="CP000436">
    <property type="protein sequence ID" value="ABI25207.1"/>
    <property type="molecule type" value="Genomic_DNA"/>
</dbReference>
<dbReference type="SMR" id="Q0I3D3"/>
<dbReference type="KEGG" id="hso:HS_0932"/>
<dbReference type="eggNOG" id="COG0825">
    <property type="taxonomic scope" value="Bacteria"/>
</dbReference>
<dbReference type="HOGENOM" id="CLU_015486_0_2_6"/>
<dbReference type="UniPathway" id="UPA00655">
    <property type="reaction ID" value="UER00711"/>
</dbReference>
<dbReference type="GO" id="GO:0009317">
    <property type="term" value="C:acetyl-CoA carboxylase complex"/>
    <property type="evidence" value="ECO:0007669"/>
    <property type="project" value="InterPro"/>
</dbReference>
<dbReference type="GO" id="GO:0003989">
    <property type="term" value="F:acetyl-CoA carboxylase activity"/>
    <property type="evidence" value="ECO:0007669"/>
    <property type="project" value="InterPro"/>
</dbReference>
<dbReference type="GO" id="GO:0005524">
    <property type="term" value="F:ATP binding"/>
    <property type="evidence" value="ECO:0007669"/>
    <property type="project" value="UniProtKB-KW"/>
</dbReference>
<dbReference type="GO" id="GO:0016743">
    <property type="term" value="F:carboxyl- or carbamoyltransferase activity"/>
    <property type="evidence" value="ECO:0007669"/>
    <property type="project" value="UniProtKB-UniRule"/>
</dbReference>
<dbReference type="GO" id="GO:0006633">
    <property type="term" value="P:fatty acid biosynthetic process"/>
    <property type="evidence" value="ECO:0007669"/>
    <property type="project" value="UniProtKB-KW"/>
</dbReference>
<dbReference type="GO" id="GO:2001295">
    <property type="term" value="P:malonyl-CoA biosynthetic process"/>
    <property type="evidence" value="ECO:0007669"/>
    <property type="project" value="UniProtKB-UniRule"/>
</dbReference>
<dbReference type="FunFam" id="3.90.226.10:FF:000008">
    <property type="entry name" value="Acetyl-coenzyme A carboxylase carboxyl transferase subunit alpha"/>
    <property type="match status" value="1"/>
</dbReference>
<dbReference type="Gene3D" id="3.90.226.10">
    <property type="entry name" value="2-enoyl-CoA Hydratase, Chain A, domain 1"/>
    <property type="match status" value="1"/>
</dbReference>
<dbReference type="HAMAP" id="MF_00823">
    <property type="entry name" value="AcetylCoA_CT_alpha"/>
    <property type="match status" value="1"/>
</dbReference>
<dbReference type="InterPro" id="IPR001095">
    <property type="entry name" value="Acetyl_CoA_COase_a_su"/>
</dbReference>
<dbReference type="InterPro" id="IPR029045">
    <property type="entry name" value="ClpP/crotonase-like_dom_sf"/>
</dbReference>
<dbReference type="InterPro" id="IPR011763">
    <property type="entry name" value="COA_CT_C"/>
</dbReference>
<dbReference type="NCBIfam" id="TIGR00513">
    <property type="entry name" value="accA"/>
    <property type="match status" value="1"/>
</dbReference>
<dbReference type="NCBIfam" id="NF041504">
    <property type="entry name" value="AccA_sub"/>
    <property type="match status" value="1"/>
</dbReference>
<dbReference type="NCBIfam" id="NF004344">
    <property type="entry name" value="PRK05724.1"/>
    <property type="match status" value="1"/>
</dbReference>
<dbReference type="PANTHER" id="PTHR42853">
    <property type="entry name" value="ACETYL-COENZYME A CARBOXYLASE CARBOXYL TRANSFERASE SUBUNIT ALPHA"/>
    <property type="match status" value="1"/>
</dbReference>
<dbReference type="PANTHER" id="PTHR42853:SF3">
    <property type="entry name" value="ACETYL-COENZYME A CARBOXYLASE CARBOXYL TRANSFERASE SUBUNIT ALPHA, CHLOROPLASTIC"/>
    <property type="match status" value="1"/>
</dbReference>
<dbReference type="Pfam" id="PF03255">
    <property type="entry name" value="ACCA"/>
    <property type="match status" value="1"/>
</dbReference>
<dbReference type="PRINTS" id="PR01069">
    <property type="entry name" value="ACCCTRFRASEA"/>
</dbReference>
<dbReference type="SUPFAM" id="SSF52096">
    <property type="entry name" value="ClpP/crotonase"/>
    <property type="match status" value="1"/>
</dbReference>
<dbReference type="PROSITE" id="PS50989">
    <property type="entry name" value="COA_CT_CTER"/>
    <property type="match status" value="1"/>
</dbReference>
<accession>Q0I3D3</accession>
<protein>
    <recommendedName>
        <fullName evidence="1">Acetyl-coenzyme A carboxylase carboxyl transferase subunit alpha</fullName>
        <shortName evidence="1">ACCase subunit alpha</shortName>
        <shortName evidence="1">Acetyl-CoA carboxylase carboxyltransferase subunit alpha</shortName>
        <ecNumber evidence="1">2.1.3.15</ecNumber>
    </recommendedName>
</protein>
<evidence type="ECO:0000255" key="1">
    <source>
        <dbReference type="HAMAP-Rule" id="MF_00823"/>
    </source>
</evidence>
<evidence type="ECO:0000255" key="2">
    <source>
        <dbReference type="PROSITE-ProRule" id="PRU01137"/>
    </source>
</evidence>
<organism>
    <name type="scientific">Histophilus somni (strain 129Pt)</name>
    <name type="common">Haemophilus somnus</name>
    <dbReference type="NCBI Taxonomy" id="205914"/>
    <lineage>
        <taxon>Bacteria</taxon>
        <taxon>Pseudomonadati</taxon>
        <taxon>Pseudomonadota</taxon>
        <taxon>Gammaproteobacteria</taxon>
        <taxon>Pasteurellales</taxon>
        <taxon>Pasteurellaceae</taxon>
        <taxon>Histophilus</taxon>
    </lineage>
</organism>
<gene>
    <name evidence="1" type="primary">accA</name>
    <name type="ordered locus">HS_0932</name>
</gene>
<comment type="function">
    <text evidence="1">Component of the acetyl coenzyme A carboxylase (ACC) complex. First, biotin carboxylase catalyzes the carboxylation of biotin on its carrier protein (BCCP) and then the CO(2) group is transferred by the carboxyltransferase to acetyl-CoA to form malonyl-CoA.</text>
</comment>
<comment type="catalytic activity">
    <reaction evidence="1">
        <text>N(6)-carboxybiotinyl-L-lysyl-[protein] + acetyl-CoA = N(6)-biotinyl-L-lysyl-[protein] + malonyl-CoA</text>
        <dbReference type="Rhea" id="RHEA:54728"/>
        <dbReference type="Rhea" id="RHEA-COMP:10505"/>
        <dbReference type="Rhea" id="RHEA-COMP:10506"/>
        <dbReference type="ChEBI" id="CHEBI:57288"/>
        <dbReference type="ChEBI" id="CHEBI:57384"/>
        <dbReference type="ChEBI" id="CHEBI:83144"/>
        <dbReference type="ChEBI" id="CHEBI:83145"/>
        <dbReference type="EC" id="2.1.3.15"/>
    </reaction>
</comment>
<comment type="pathway">
    <text evidence="1">Lipid metabolism; malonyl-CoA biosynthesis; malonyl-CoA from acetyl-CoA: step 1/1.</text>
</comment>
<comment type="subunit">
    <text evidence="1">Acetyl-CoA carboxylase is a heterohexamer composed of biotin carboxyl carrier protein (AccB), biotin carboxylase (AccC) and two subunits each of ACCase subunit alpha (AccA) and ACCase subunit beta (AccD).</text>
</comment>
<comment type="subcellular location">
    <subcellularLocation>
        <location evidence="1">Cytoplasm</location>
    </subcellularLocation>
</comment>
<comment type="similarity">
    <text evidence="1">Belongs to the AccA family.</text>
</comment>
<name>ACCA_HISS1</name>
<sequence>MSQEFLDFELPIAELEAKIEALRSVSQQDQQINLDDEITRLQKKSAELTQKTFANLDAWQVSQMARHPNRPYTLDYIEHIFTDFQTLAGDRAFADDQAIVGGLARLEERPVMIIGHQKGRSIKEKVKRNFGMPAPEGYRKALRLMQMAERFKLPIITFIDTPGAYPGVGAEERGQSEAIARNLREMSMLKVPIICTVIGEGGSGGALAIGVGDKINMLQYSTYSVISPEGCASILWKSAEKASTAAEVMGLTASRLHELKLIDSIIEEPLGGAHRNYDTMSNNLKKRLLADLADLDKLDQETLLDRRYKRLMSYGYC</sequence>
<feature type="chain" id="PRO_1000062628" description="Acetyl-coenzyme A carboxylase carboxyl transferase subunit alpha">
    <location>
        <begin position="1"/>
        <end position="317"/>
    </location>
</feature>
<feature type="domain" description="CoA carboxyltransferase C-terminal" evidence="2">
    <location>
        <begin position="33"/>
        <end position="294"/>
    </location>
</feature>